<comment type="similarity">
    <text evidence="1">Belongs to the UPF0398 family.</text>
</comment>
<proteinExistence type="inferred from homology"/>
<sequence length="180" mass="20791">MEMIKTLYVTGYRSFELGIFQGKDPKITVIKNVLKKELASYIETGVEWILISGNLGVELWTAEVVGELKTEYPEVQLGLLYPFKDFGNNWNEQNRELLTKAESLADYINSVSHQPYQSPAQLKMHTKFLLEHSGGSLLIYDKEYPGKTEYFLKDAQHFSEREPYDIRLITMDDLQNSVID</sequence>
<evidence type="ECO:0000255" key="1">
    <source>
        <dbReference type="HAMAP-Rule" id="MF_01575"/>
    </source>
</evidence>
<organism>
    <name type="scientific">Enterococcus faecalis (strain ATCC 700802 / V583)</name>
    <dbReference type="NCBI Taxonomy" id="226185"/>
    <lineage>
        <taxon>Bacteria</taxon>
        <taxon>Bacillati</taxon>
        <taxon>Bacillota</taxon>
        <taxon>Bacilli</taxon>
        <taxon>Lactobacillales</taxon>
        <taxon>Enterococcaceae</taxon>
        <taxon>Enterococcus</taxon>
    </lineage>
</organism>
<keyword id="KW-1185">Reference proteome</keyword>
<name>Y1150_ENTFA</name>
<dbReference type="EMBL" id="AE016830">
    <property type="protein sequence ID" value="AAO80950.1"/>
    <property type="molecule type" value="Genomic_DNA"/>
</dbReference>
<dbReference type="RefSeq" id="NP_814880.1">
    <property type="nucleotide sequence ID" value="NC_004668.1"/>
</dbReference>
<dbReference type="RefSeq" id="WP_002369608.1">
    <property type="nucleotide sequence ID" value="NZ_KE136528.1"/>
</dbReference>
<dbReference type="SMR" id="Q836G3"/>
<dbReference type="STRING" id="226185.EF_1150"/>
<dbReference type="EnsemblBacteria" id="AAO80950">
    <property type="protein sequence ID" value="AAO80950"/>
    <property type="gene ID" value="EF_1150"/>
</dbReference>
<dbReference type="KEGG" id="efa:EF1150"/>
<dbReference type="PATRIC" id="fig|226185.45.peg.2346"/>
<dbReference type="eggNOG" id="COG4474">
    <property type="taxonomic scope" value="Bacteria"/>
</dbReference>
<dbReference type="HOGENOM" id="CLU_105319_0_0_9"/>
<dbReference type="Proteomes" id="UP000001415">
    <property type="component" value="Chromosome"/>
</dbReference>
<dbReference type="Gene3D" id="3.40.50.450">
    <property type="match status" value="1"/>
</dbReference>
<dbReference type="HAMAP" id="MF_01575">
    <property type="entry name" value="UPF0398"/>
    <property type="match status" value="1"/>
</dbReference>
<dbReference type="InterPro" id="IPR010697">
    <property type="entry name" value="YspA"/>
</dbReference>
<dbReference type="NCBIfam" id="NF010181">
    <property type="entry name" value="PRK13660.1"/>
    <property type="match status" value="1"/>
</dbReference>
<dbReference type="PANTHER" id="PTHR38440:SF1">
    <property type="entry name" value="UPF0398 PROTEIN SPR0331"/>
    <property type="match status" value="1"/>
</dbReference>
<dbReference type="PANTHER" id="PTHR38440">
    <property type="entry name" value="UPF0398 PROTEIN YPSA"/>
    <property type="match status" value="1"/>
</dbReference>
<dbReference type="Pfam" id="PF06908">
    <property type="entry name" value="YpsA"/>
    <property type="match status" value="1"/>
</dbReference>
<dbReference type="PIRSF" id="PIRSF021290">
    <property type="entry name" value="DUF1273"/>
    <property type="match status" value="1"/>
</dbReference>
<dbReference type="SUPFAM" id="SSF102405">
    <property type="entry name" value="MCP/YpsA-like"/>
    <property type="match status" value="1"/>
</dbReference>
<protein>
    <recommendedName>
        <fullName evidence="1">UPF0398 protein EF_1150</fullName>
    </recommendedName>
</protein>
<accession>Q836G3</accession>
<reference key="1">
    <citation type="journal article" date="2003" name="Science">
        <title>Role of mobile DNA in the evolution of vancomycin-resistant Enterococcus faecalis.</title>
        <authorList>
            <person name="Paulsen I.T."/>
            <person name="Banerjei L."/>
            <person name="Myers G.S.A."/>
            <person name="Nelson K.E."/>
            <person name="Seshadri R."/>
            <person name="Read T.D."/>
            <person name="Fouts D.E."/>
            <person name="Eisen J.A."/>
            <person name="Gill S.R."/>
            <person name="Heidelberg J.F."/>
            <person name="Tettelin H."/>
            <person name="Dodson R.J."/>
            <person name="Umayam L.A."/>
            <person name="Brinkac L.M."/>
            <person name="Beanan M.J."/>
            <person name="Daugherty S.C."/>
            <person name="DeBoy R.T."/>
            <person name="Durkin S.A."/>
            <person name="Kolonay J.F."/>
            <person name="Madupu R."/>
            <person name="Nelson W.C."/>
            <person name="Vamathevan J.J."/>
            <person name="Tran B."/>
            <person name="Upton J."/>
            <person name="Hansen T."/>
            <person name="Shetty J."/>
            <person name="Khouri H.M."/>
            <person name="Utterback T.R."/>
            <person name="Radune D."/>
            <person name="Ketchum K.A."/>
            <person name="Dougherty B.A."/>
            <person name="Fraser C.M."/>
        </authorList>
    </citation>
    <scope>NUCLEOTIDE SEQUENCE [LARGE SCALE GENOMIC DNA]</scope>
    <source>
        <strain>ATCC 700802 / V583</strain>
    </source>
</reference>
<gene>
    <name type="ordered locus">EF_1150</name>
</gene>
<feature type="chain" id="PRO_0000267156" description="UPF0398 protein EF_1150">
    <location>
        <begin position="1"/>
        <end position="180"/>
    </location>
</feature>